<feature type="chain" id="PRO_1000024148" description="Dihydroorotate dehydrogenase (quinone)">
    <location>
        <begin position="1"/>
        <end position="336"/>
    </location>
</feature>
<feature type="active site" description="Nucleophile" evidence="1">
    <location>
        <position position="175"/>
    </location>
</feature>
<feature type="binding site" evidence="1">
    <location>
        <begin position="62"/>
        <end position="66"/>
    </location>
    <ligand>
        <name>FMN</name>
        <dbReference type="ChEBI" id="CHEBI:58210"/>
    </ligand>
</feature>
<feature type="binding site" evidence="1">
    <location>
        <position position="66"/>
    </location>
    <ligand>
        <name>substrate</name>
    </ligand>
</feature>
<feature type="binding site" evidence="1">
    <location>
        <position position="86"/>
    </location>
    <ligand>
        <name>FMN</name>
        <dbReference type="ChEBI" id="CHEBI:58210"/>
    </ligand>
</feature>
<feature type="binding site" evidence="1">
    <location>
        <begin position="111"/>
        <end position="115"/>
    </location>
    <ligand>
        <name>substrate</name>
    </ligand>
</feature>
<feature type="binding site" evidence="1">
    <location>
        <position position="139"/>
    </location>
    <ligand>
        <name>FMN</name>
        <dbReference type="ChEBI" id="CHEBI:58210"/>
    </ligand>
</feature>
<feature type="binding site" evidence="1">
    <location>
        <position position="172"/>
    </location>
    <ligand>
        <name>FMN</name>
        <dbReference type="ChEBI" id="CHEBI:58210"/>
    </ligand>
</feature>
<feature type="binding site" evidence="1">
    <location>
        <position position="172"/>
    </location>
    <ligand>
        <name>substrate</name>
    </ligand>
</feature>
<feature type="binding site" evidence="1">
    <location>
        <position position="177"/>
    </location>
    <ligand>
        <name>substrate</name>
    </ligand>
</feature>
<feature type="binding site" evidence="1">
    <location>
        <position position="217"/>
    </location>
    <ligand>
        <name>FMN</name>
        <dbReference type="ChEBI" id="CHEBI:58210"/>
    </ligand>
</feature>
<feature type="binding site" evidence="1">
    <location>
        <position position="245"/>
    </location>
    <ligand>
        <name>FMN</name>
        <dbReference type="ChEBI" id="CHEBI:58210"/>
    </ligand>
</feature>
<feature type="binding site" evidence="1">
    <location>
        <begin position="246"/>
        <end position="247"/>
    </location>
    <ligand>
        <name>substrate</name>
    </ligand>
</feature>
<feature type="binding site" evidence="1">
    <location>
        <position position="268"/>
    </location>
    <ligand>
        <name>FMN</name>
        <dbReference type="ChEBI" id="CHEBI:58210"/>
    </ligand>
</feature>
<feature type="binding site" evidence="1">
    <location>
        <position position="297"/>
    </location>
    <ligand>
        <name>FMN</name>
        <dbReference type="ChEBI" id="CHEBI:58210"/>
    </ligand>
</feature>
<feature type="binding site" evidence="1">
    <location>
        <begin position="318"/>
        <end position="319"/>
    </location>
    <ligand>
        <name>FMN</name>
        <dbReference type="ChEBI" id="CHEBI:58210"/>
    </ligand>
</feature>
<protein>
    <recommendedName>
        <fullName evidence="1">Dihydroorotate dehydrogenase (quinone)</fullName>
        <ecNumber evidence="1">1.3.5.2</ecNumber>
    </recommendedName>
    <alternativeName>
        <fullName evidence="1">DHOdehase</fullName>
        <shortName evidence="1">DHOD</shortName>
        <shortName evidence="1">DHODase</shortName>
    </alternativeName>
    <alternativeName>
        <fullName evidence="1">Dihydroorotate oxidase</fullName>
    </alternativeName>
</protein>
<keyword id="KW-1003">Cell membrane</keyword>
<keyword id="KW-0285">Flavoprotein</keyword>
<keyword id="KW-0288">FMN</keyword>
<keyword id="KW-0472">Membrane</keyword>
<keyword id="KW-0560">Oxidoreductase</keyword>
<keyword id="KW-0665">Pyrimidine biosynthesis</keyword>
<comment type="function">
    <text evidence="1">Catalyzes the conversion of dihydroorotate to orotate with quinone as electron acceptor.</text>
</comment>
<comment type="catalytic activity">
    <reaction evidence="1">
        <text>(S)-dihydroorotate + a quinone = orotate + a quinol</text>
        <dbReference type="Rhea" id="RHEA:30187"/>
        <dbReference type="ChEBI" id="CHEBI:24646"/>
        <dbReference type="ChEBI" id="CHEBI:30839"/>
        <dbReference type="ChEBI" id="CHEBI:30864"/>
        <dbReference type="ChEBI" id="CHEBI:132124"/>
        <dbReference type="EC" id="1.3.5.2"/>
    </reaction>
</comment>
<comment type="cofactor">
    <cofactor evidence="1">
        <name>FMN</name>
        <dbReference type="ChEBI" id="CHEBI:58210"/>
    </cofactor>
    <text evidence="1">Binds 1 FMN per subunit.</text>
</comment>
<comment type="pathway">
    <text evidence="1">Pyrimidine metabolism; UMP biosynthesis via de novo pathway; orotate from (S)-dihydroorotate (quinone route): step 1/1.</text>
</comment>
<comment type="subunit">
    <text evidence="1">Monomer.</text>
</comment>
<comment type="subcellular location">
    <subcellularLocation>
        <location evidence="1">Cell membrane</location>
        <topology evidence="1">Peripheral membrane protein</topology>
    </subcellularLocation>
</comment>
<comment type="similarity">
    <text evidence="1">Belongs to the dihydroorotate dehydrogenase family. Type 2 subfamily.</text>
</comment>
<reference key="1">
    <citation type="journal article" date="2008" name="BMC Genomics">
        <title>The genome of Aeromonas salmonicida subsp. salmonicida A449: insights into the evolution of a fish pathogen.</title>
        <authorList>
            <person name="Reith M.E."/>
            <person name="Singh R.K."/>
            <person name="Curtis B."/>
            <person name="Boyd J.M."/>
            <person name="Bouevitch A."/>
            <person name="Kimball J."/>
            <person name="Munholland J."/>
            <person name="Murphy C."/>
            <person name="Sarty D."/>
            <person name="Williams J."/>
            <person name="Nash J.H."/>
            <person name="Johnson S.C."/>
            <person name="Brown L.L."/>
        </authorList>
    </citation>
    <scope>NUCLEOTIDE SEQUENCE [LARGE SCALE GENOMIC DNA]</scope>
    <source>
        <strain>A449</strain>
    </source>
</reference>
<sequence length="336" mass="36411">MLYPLARHFLFKFNPEQAHDLSIKYLPRLLGTPLDCFFRHSLPKRPVTVMGLYFANPVGLAAGLDKDGECIDAFGAMGFGFIEVGTVTPKPQSGNDKPRLFRVIPAEGIINRMGFNNKGVDHLVAQVKKAKYQGVIGINIGKNKDTPIEQGKDDYLICMDKVYDHAGYIAVNISSPNTPGLRSLQYGDALDELLAALKVRQQELAAQYKKYVPLAVKIAPDLSLDEINQVAASLIKNGIDGVIATNTTLDREMIYDMPHAGEAGGLSGRPLQHKSTEVIRQLAKALDGALPIIGVGGIDSAMAAREKLAAGASLVQIYSGFIYKGPSLVKEIVTHI</sequence>
<evidence type="ECO:0000255" key="1">
    <source>
        <dbReference type="HAMAP-Rule" id="MF_00225"/>
    </source>
</evidence>
<organism>
    <name type="scientific">Aeromonas salmonicida (strain A449)</name>
    <dbReference type="NCBI Taxonomy" id="382245"/>
    <lineage>
        <taxon>Bacteria</taxon>
        <taxon>Pseudomonadati</taxon>
        <taxon>Pseudomonadota</taxon>
        <taxon>Gammaproteobacteria</taxon>
        <taxon>Aeromonadales</taxon>
        <taxon>Aeromonadaceae</taxon>
        <taxon>Aeromonas</taxon>
    </lineage>
</organism>
<proteinExistence type="inferred from homology"/>
<dbReference type="EC" id="1.3.5.2" evidence="1"/>
<dbReference type="EMBL" id="CP000644">
    <property type="protein sequence ID" value="ABO90064.1"/>
    <property type="molecule type" value="Genomic_DNA"/>
</dbReference>
<dbReference type="RefSeq" id="WP_005315654.1">
    <property type="nucleotide sequence ID" value="NC_009348.1"/>
</dbReference>
<dbReference type="SMR" id="A4SME2"/>
<dbReference type="STRING" id="29491.GCA_000820065_03867"/>
<dbReference type="GeneID" id="79879862"/>
<dbReference type="KEGG" id="asa:ASA_1993"/>
<dbReference type="eggNOG" id="COG0167">
    <property type="taxonomic scope" value="Bacteria"/>
</dbReference>
<dbReference type="HOGENOM" id="CLU_013640_2_0_6"/>
<dbReference type="UniPathway" id="UPA00070">
    <property type="reaction ID" value="UER00946"/>
</dbReference>
<dbReference type="Proteomes" id="UP000000225">
    <property type="component" value="Chromosome"/>
</dbReference>
<dbReference type="GO" id="GO:0005737">
    <property type="term" value="C:cytoplasm"/>
    <property type="evidence" value="ECO:0007669"/>
    <property type="project" value="InterPro"/>
</dbReference>
<dbReference type="GO" id="GO:0005886">
    <property type="term" value="C:plasma membrane"/>
    <property type="evidence" value="ECO:0007669"/>
    <property type="project" value="UniProtKB-SubCell"/>
</dbReference>
<dbReference type="GO" id="GO:0106430">
    <property type="term" value="F:dihydroorotate dehydrogenase (quinone) activity"/>
    <property type="evidence" value="ECO:0007669"/>
    <property type="project" value="UniProtKB-EC"/>
</dbReference>
<dbReference type="GO" id="GO:0006207">
    <property type="term" value="P:'de novo' pyrimidine nucleobase biosynthetic process"/>
    <property type="evidence" value="ECO:0007669"/>
    <property type="project" value="InterPro"/>
</dbReference>
<dbReference type="GO" id="GO:0044205">
    <property type="term" value="P:'de novo' UMP biosynthetic process"/>
    <property type="evidence" value="ECO:0007669"/>
    <property type="project" value="UniProtKB-UniRule"/>
</dbReference>
<dbReference type="CDD" id="cd04738">
    <property type="entry name" value="DHOD_2_like"/>
    <property type="match status" value="1"/>
</dbReference>
<dbReference type="FunFam" id="3.20.20.70:FF:000028">
    <property type="entry name" value="Dihydroorotate dehydrogenase (quinone)"/>
    <property type="match status" value="1"/>
</dbReference>
<dbReference type="Gene3D" id="3.20.20.70">
    <property type="entry name" value="Aldolase class I"/>
    <property type="match status" value="1"/>
</dbReference>
<dbReference type="HAMAP" id="MF_00225">
    <property type="entry name" value="DHO_dh_type2"/>
    <property type="match status" value="1"/>
</dbReference>
<dbReference type="InterPro" id="IPR013785">
    <property type="entry name" value="Aldolase_TIM"/>
</dbReference>
<dbReference type="InterPro" id="IPR050074">
    <property type="entry name" value="DHO_dehydrogenase"/>
</dbReference>
<dbReference type="InterPro" id="IPR012135">
    <property type="entry name" value="Dihydroorotate_DH_1_2"/>
</dbReference>
<dbReference type="InterPro" id="IPR005719">
    <property type="entry name" value="Dihydroorotate_DH_2"/>
</dbReference>
<dbReference type="InterPro" id="IPR005720">
    <property type="entry name" value="Dihydroorotate_DH_cat"/>
</dbReference>
<dbReference type="InterPro" id="IPR001295">
    <property type="entry name" value="Dihydroorotate_DH_CS"/>
</dbReference>
<dbReference type="NCBIfam" id="NF003644">
    <property type="entry name" value="PRK05286.1-1"/>
    <property type="match status" value="1"/>
</dbReference>
<dbReference type="NCBIfam" id="NF003645">
    <property type="entry name" value="PRK05286.1-2"/>
    <property type="match status" value="1"/>
</dbReference>
<dbReference type="NCBIfam" id="NF003646">
    <property type="entry name" value="PRK05286.1-4"/>
    <property type="match status" value="1"/>
</dbReference>
<dbReference type="NCBIfam" id="NF003652">
    <property type="entry name" value="PRK05286.2-5"/>
    <property type="match status" value="1"/>
</dbReference>
<dbReference type="NCBIfam" id="TIGR01036">
    <property type="entry name" value="pyrD_sub2"/>
    <property type="match status" value="1"/>
</dbReference>
<dbReference type="PANTHER" id="PTHR48109:SF4">
    <property type="entry name" value="DIHYDROOROTATE DEHYDROGENASE (QUINONE), MITOCHONDRIAL"/>
    <property type="match status" value="1"/>
</dbReference>
<dbReference type="PANTHER" id="PTHR48109">
    <property type="entry name" value="DIHYDROOROTATE DEHYDROGENASE (QUINONE), MITOCHONDRIAL-RELATED"/>
    <property type="match status" value="1"/>
</dbReference>
<dbReference type="Pfam" id="PF01180">
    <property type="entry name" value="DHO_dh"/>
    <property type="match status" value="1"/>
</dbReference>
<dbReference type="PIRSF" id="PIRSF000164">
    <property type="entry name" value="DHO_oxidase"/>
    <property type="match status" value="1"/>
</dbReference>
<dbReference type="SUPFAM" id="SSF51395">
    <property type="entry name" value="FMN-linked oxidoreductases"/>
    <property type="match status" value="1"/>
</dbReference>
<dbReference type="PROSITE" id="PS00911">
    <property type="entry name" value="DHODEHASE_1"/>
    <property type="match status" value="1"/>
</dbReference>
<dbReference type="PROSITE" id="PS00912">
    <property type="entry name" value="DHODEHASE_2"/>
    <property type="match status" value="1"/>
</dbReference>
<name>PYRD_AERS4</name>
<gene>
    <name evidence="1" type="primary">pyrD</name>
    <name type="ordered locus">ASA_1993</name>
</gene>
<accession>A4SME2</accession>